<reference key="1">
    <citation type="journal article" date="1999" name="Nature">
        <title>Genomic sequence comparison of two unrelated isolates of the human gastric pathogen Helicobacter pylori.</title>
        <authorList>
            <person name="Alm R.A."/>
            <person name="Ling L.-S.L."/>
            <person name="Moir D.T."/>
            <person name="King B.L."/>
            <person name="Brown E.D."/>
            <person name="Doig P.C."/>
            <person name="Smith D.R."/>
            <person name="Noonan B."/>
            <person name="Guild B.C."/>
            <person name="deJonge B.L."/>
            <person name="Carmel G."/>
            <person name="Tummino P.J."/>
            <person name="Caruso A."/>
            <person name="Uria-Nickelsen M."/>
            <person name="Mills D.M."/>
            <person name="Ives C."/>
            <person name="Gibson R."/>
            <person name="Merberg D."/>
            <person name="Mills S.D."/>
            <person name="Jiang Q."/>
            <person name="Taylor D.E."/>
            <person name="Vovis G.F."/>
            <person name="Trust T.J."/>
        </authorList>
    </citation>
    <scope>NUCLEOTIDE SEQUENCE [LARGE SCALE GENOMIC DNA]</scope>
    <source>
        <strain>J99 / ATCC 700824</strain>
    </source>
</reference>
<dbReference type="EMBL" id="AE001439">
    <property type="protein sequence ID" value="AAD06030.1"/>
    <property type="molecule type" value="Genomic_DNA"/>
</dbReference>
<dbReference type="PIR" id="A71931">
    <property type="entry name" value="A71931"/>
</dbReference>
<dbReference type="RefSeq" id="WP_000704288.1">
    <property type="nucleotide sequence ID" value="NC_000921.1"/>
</dbReference>
<dbReference type="SMR" id="Q9ZLX4"/>
<dbReference type="KEGG" id="hpj:jhp_0452"/>
<dbReference type="eggNOG" id="COG0592">
    <property type="taxonomic scope" value="Bacteria"/>
</dbReference>
<dbReference type="Proteomes" id="UP000000804">
    <property type="component" value="Chromosome"/>
</dbReference>
<dbReference type="GO" id="GO:0005737">
    <property type="term" value="C:cytoplasm"/>
    <property type="evidence" value="ECO:0007669"/>
    <property type="project" value="UniProtKB-SubCell"/>
</dbReference>
<dbReference type="GO" id="GO:0009360">
    <property type="term" value="C:DNA polymerase III complex"/>
    <property type="evidence" value="ECO:0007669"/>
    <property type="project" value="InterPro"/>
</dbReference>
<dbReference type="GO" id="GO:0008408">
    <property type="term" value="F:3'-5' exonuclease activity"/>
    <property type="evidence" value="ECO:0007669"/>
    <property type="project" value="InterPro"/>
</dbReference>
<dbReference type="GO" id="GO:0003677">
    <property type="term" value="F:DNA binding"/>
    <property type="evidence" value="ECO:0007669"/>
    <property type="project" value="UniProtKB-KW"/>
</dbReference>
<dbReference type="GO" id="GO:0003887">
    <property type="term" value="F:DNA-directed DNA polymerase activity"/>
    <property type="evidence" value="ECO:0007669"/>
    <property type="project" value="UniProtKB-KW"/>
</dbReference>
<dbReference type="GO" id="GO:0006271">
    <property type="term" value="P:DNA strand elongation involved in DNA replication"/>
    <property type="evidence" value="ECO:0007669"/>
    <property type="project" value="TreeGrafter"/>
</dbReference>
<dbReference type="CDD" id="cd00140">
    <property type="entry name" value="beta_clamp"/>
    <property type="match status" value="1"/>
</dbReference>
<dbReference type="FunFam" id="3.10.150.10:FF:000020">
    <property type="entry name" value="Beta sliding clamp"/>
    <property type="match status" value="1"/>
</dbReference>
<dbReference type="FunFam" id="3.10.150.10:FF:000018">
    <property type="entry name" value="DNA polymerase III subunit beta"/>
    <property type="match status" value="1"/>
</dbReference>
<dbReference type="FunFam" id="3.10.150.10:FF:000021">
    <property type="entry name" value="DNA polymerase III, beta subunit"/>
    <property type="match status" value="1"/>
</dbReference>
<dbReference type="Gene3D" id="3.10.150.10">
    <property type="entry name" value="DNA Polymerase III, subunit A, domain 2"/>
    <property type="match status" value="3"/>
</dbReference>
<dbReference type="InterPro" id="IPR046938">
    <property type="entry name" value="DNA_clamp_sf"/>
</dbReference>
<dbReference type="InterPro" id="IPR001001">
    <property type="entry name" value="DNA_polIII_beta"/>
</dbReference>
<dbReference type="InterPro" id="IPR022635">
    <property type="entry name" value="DNA_polIII_beta_C"/>
</dbReference>
<dbReference type="InterPro" id="IPR022637">
    <property type="entry name" value="DNA_polIII_beta_cen"/>
</dbReference>
<dbReference type="InterPro" id="IPR022634">
    <property type="entry name" value="DNA_polIII_beta_N"/>
</dbReference>
<dbReference type="NCBIfam" id="TIGR00663">
    <property type="entry name" value="dnan"/>
    <property type="match status" value="1"/>
</dbReference>
<dbReference type="PANTHER" id="PTHR30478:SF0">
    <property type="entry name" value="BETA SLIDING CLAMP"/>
    <property type="match status" value="1"/>
</dbReference>
<dbReference type="PANTHER" id="PTHR30478">
    <property type="entry name" value="DNA POLYMERASE III SUBUNIT BETA"/>
    <property type="match status" value="1"/>
</dbReference>
<dbReference type="Pfam" id="PF00712">
    <property type="entry name" value="DNA_pol3_beta"/>
    <property type="match status" value="1"/>
</dbReference>
<dbReference type="Pfam" id="PF02767">
    <property type="entry name" value="DNA_pol3_beta_2"/>
    <property type="match status" value="1"/>
</dbReference>
<dbReference type="Pfam" id="PF02768">
    <property type="entry name" value="DNA_pol3_beta_3"/>
    <property type="match status" value="1"/>
</dbReference>
<dbReference type="SMART" id="SM00480">
    <property type="entry name" value="POL3Bc"/>
    <property type="match status" value="1"/>
</dbReference>
<dbReference type="SUPFAM" id="SSF55979">
    <property type="entry name" value="DNA clamp"/>
    <property type="match status" value="3"/>
</dbReference>
<evidence type="ECO:0000250" key="1">
    <source>
        <dbReference type="UniProtKB" id="P0A988"/>
    </source>
</evidence>
<evidence type="ECO:0000305" key="2"/>
<comment type="function">
    <text evidence="1">Confers DNA tethering and processivity to DNA polymerases and other proteins. Acts as a clamp, forming a ring around DNA (a reaction catalyzed by the clamp-loading complex) which diffuses in an ATP-independent manner freely and bidirectionally along dsDNA. Initially characterized for its ability to contact the catalytic subunit of DNA polymerase III (Pol III), a complex, multichain enzyme responsible for most of the replicative synthesis in bacteria; Pol III exhibits 3'-5' exonuclease proofreading activity. The beta chain is required for initiation of replication as well as for processivity of DNA replication.</text>
</comment>
<comment type="subunit">
    <text evidence="1">Forms a ring-shaped head-to-tail homodimer around DNA which binds and tethers DNA polymerases and other proteins to the DNA. The DNA replisome complex has a single clamp-loading complex (3 tau and 1 each of delta, delta', psi and chi subunits) which binds 3 Pol III cores (1 core on the leading strand and 2 on the lagging strand) each with a beta sliding clamp dimer. Additional proteins in the replisome are other copies of gamma, psi and chi, Ssb, DNA helicase and RNA primase.</text>
</comment>
<comment type="subcellular location">
    <subcellularLocation>
        <location evidence="1">Cytoplasm</location>
    </subcellularLocation>
</comment>
<comment type="similarity">
    <text evidence="2">Belongs to the beta sliding clamp family.</text>
</comment>
<accession>Q9ZLX4</accession>
<proteinExistence type="inferred from homology"/>
<feature type="chain" id="PRO_0000105439" description="Beta sliding clamp">
    <location>
        <begin position="1"/>
        <end position="374"/>
    </location>
</feature>
<name>DPO3B_HELPJ</name>
<gene>
    <name type="primary">dnaN</name>
    <name type="ordered locus">jhp_0452</name>
</gene>
<keyword id="KW-0963">Cytoplasm</keyword>
<keyword id="KW-0235">DNA replication</keyword>
<keyword id="KW-0238">DNA-binding</keyword>
<keyword id="KW-0239">DNA-directed DNA polymerase</keyword>
<keyword id="KW-0548">Nucleotidyltransferase</keyword>
<keyword id="KW-0808">Transferase</keyword>
<sequence>MKISVSKNDLENTLRYLQAFLDKKDASSIASHIHLEVIKEKLFLKASDSDIGLKSYISTQSTDKEGVGTINGKKFLDIISCLKDSNIVLETKDDSLVIKQNKSSFKLPMFDADEFPEFPVIDPKVSLEINAPFLVDAFKKIAPVIEQTSHKRELAGVLMQFNQKHQTLSVVGTDTKRLSYTQLEKISIHSTEEDISCILPKRALLEILKLFYENFSFKSDGMLAVVENETHAFFTKLIDGNYPDYQKILPKEYTSSFTLGKEEFKEGIKLCSSLSSTIKLTLEKNNALFESLDSEHSETAKTSVEIEKGLDIEKAFHLGVNAKFFLEALNALGTTQFVLKCNEPSSPFLIQEPLDEKQSHLNAKISTLMMPITL</sequence>
<protein>
    <recommendedName>
        <fullName>Beta sliding clamp</fullName>
        <shortName>Beta clamp</shortName>
        <shortName>Sliding clamp</shortName>
    </recommendedName>
    <alternativeName>
        <fullName>Beta-clamp processivity factor</fullName>
    </alternativeName>
    <alternativeName>
        <fullName>DNA polymerase III beta sliding clamp subunit</fullName>
    </alternativeName>
    <alternativeName>
        <fullName>DNA polymerase III subunit beta</fullName>
    </alternativeName>
</protein>
<organism>
    <name type="scientific">Helicobacter pylori (strain J99 / ATCC 700824)</name>
    <name type="common">Campylobacter pylori J99</name>
    <dbReference type="NCBI Taxonomy" id="85963"/>
    <lineage>
        <taxon>Bacteria</taxon>
        <taxon>Pseudomonadati</taxon>
        <taxon>Campylobacterota</taxon>
        <taxon>Epsilonproteobacteria</taxon>
        <taxon>Campylobacterales</taxon>
        <taxon>Helicobacteraceae</taxon>
        <taxon>Helicobacter</taxon>
    </lineage>
</organism>